<name>FUS_MEASY</name>
<organism>
    <name type="scientific">Measles virus (strain Yamagata-1)</name>
    <name type="common">MeV</name>
    <name type="synonym">Subacute sclerose panencephalitis virus</name>
    <dbReference type="NCBI Taxonomy" id="11239"/>
    <lineage>
        <taxon>Viruses</taxon>
        <taxon>Riboviria</taxon>
        <taxon>Orthornavirae</taxon>
        <taxon>Negarnaviricota</taxon>
        <taxon>Haploviricotina</taxon>
        <taxon>Monjiviricetes</taxon>
        <taxon>Mononegavirales</taxon>
        <taxon>Paramyxoviridae</taxon>
        <taxon>Orthoparamyxovirinae</taxon>
        <taxon>Morbillivirus</taxon>
        <taxon>Morbillivirus hominis</taxon>
        <taxon>Measles morbillivirus</taxon>
    </lineage>
</organism>
<gene>
    <name type="primary">F</name>
</gene>
<protein>
    <recommendedName>
        <fullName>Fusion glycoprotein F0</fullName>
    </recommendedName>
    <component>
        <recommendedName>
            <fullName>Fusion glycoprotein F2</fullName>
        </recommendedName>
    </component>
    <component>
        <recommendedName>
            <fullName>Fusion glycoprotein F1</fullName>
        </recommendedName>
    </component>
</protein>
<evidence type="ECO:0000250" key="1"/>
<evidence type="ECO:0000250" key="2">
    <source>
        <dbReference type="UniProtKB" id="Q786F3"/>
    </source>
</evidence>
<evidence type="ECO:0000255" key="3"/>
<evidence type="ECO:0000305" key="4"/>
<reference key="1">
    <citation type="journal article" date="1990" name="Virus Genes">
        <title>Molecular analysis of structural protein genes of the Yamagata-1 strain of defective subacute sclerosing panencephalitis virus. IV. Nucleotide sequence of the fusion gene.</title>
        <authorList>
            <person name="Komase K."/>
            <person name="Haga T."/>
            <person name="Yoshikawa Y."/>
            <person name="Sato T.A."/>
            <person name="Yamanouchi K."/>
        </authorList>
    </citation>
    <scope>NUCLEOTIDE SEQUENCE [MRNA]</scope>
</reference>
<feature type="signal peptide" evidence="3">
    <location>
        <begin position="1"/>
        <end position="23"/>
    </location>
</feature>
<feature type="chain" id="PRO_0000039273" description="Fusion glycoprotein F0">
    <location>
        <begin position="24"/>
        <end position="534"/>
    </location>
</feature>
<feature type="chain" id="PRO_0000039274" description="Fusion glycoprotein F2">
    <location>
        <begin position="24"/>
        <end position="112"/>
    </location>
</feature>
<feature type="chain" id="PRO_0000039275" description="Fusion glycoprotein F1">
    <location>
        <begin position="113"/>
        <end position="534"/>
    </location>
</feature>
<feature type="topological domain" description="Extracellular" evidence="1">
    <location>
        <begin position="24"/>
        <end position="487"/>
    </location>
</feature>
<feature type="transmembrane region" description="Helical" evidence="1">
    <location>
        <begin position="488"/>
        <end position="518"/>
    </location>
</feature>
<feature type="topological domain" description="Cytoplasmic" evidence="1">
    <location>
        <begin position="519"/>
        <end position="534"/>
    </location>
</feature>
<feature type="region of interest" description="HRC" evidence="2">
    <location>
        <begin position="69"/>
        <end position="95"/>
    </location>
</feature>
<feature type="region of interest" description="Fusion peptide" evidence="2">
    <location>
        <begin position="113"/>
        <end position="138"/>
    </location>
</feature>
<feature type="region of interest" description="HRA" evidence="2">
    <location>
        <begin position="139"/>
        <end position="215"/>
    </location>
</feature>
<feature type="region of interest" description="Interaction with hemagglutinin" evidence="2">
    <location>
        <begin position="367"/>
        <end position="444"/>
    </location>
</feature>
<feature type="region of interest" description="HRB" evidence="2">
    <location>
        <begin position="445"/>
        <end position="494"/>
    </location>
</feature>
<feature type="coiled-coil region" evidence="3">
    <location>
        <begin position="138"/>
        <end position="166"/>
    </location>
</feature>
<feature type="coiled-coil region" evidence="3">
    <location>
        <begin position="462"/>
        <end position="487"/>
    </location>
</feature>
<feature type="site" description="Cleavage; by host" evidence="1">
    <location>
        <begin position="112"/>
        <end position="113"/>
    </location>
</feature>
<feature type="glycosylation site" description="N-linked (GlcNAc...) asparagine; by host" evidence="3">
    <location>
        <position position="29"/>
    </location>
</feature>
<feature type="glycosylation site" description="N-linked (GlcNAc...) asparagine; by host" evidence="3">
    <location>
        <position position="61"/>
    </location>
</feature>
<feature type="glycosylation site" description="N-linked (GlcNAc...) asparagine; by host" evidence="3">
    <location>
        <position position="67"/>
    </location>
</feature>
<feature type="disulfide bond" description="Interchain (with C-195)" evidence="2">
    <location>
        <position position="68"/>
    </location>
</feature>
<feature type="disulfide bond" description="Interchain (with C-68)" evidence="2">
    <location>
        <position position="195"/>
    </location>
</feature>
<feature type="disulfide bond" evidence="2">
    <location>
        <begin position="334"/>
        <end position="343"/>
    </location>
</feature>
<feature type="disulfide bond" evidence="2">
    <location>
        <begin position="358"/>
        <end position="366"/>
    </location>
</feature>
<feature type="disulfide bond" evidence="2">
    <location>
        <begin position="390"/>
        <end position="395"/>
    </location>
</feature>
<feature type="disulfide bond" evidence="2">
    <location>
        <begin position="397"/>
        <end position="420"/>
    </location>
</feature>
<comment type="function">
    <text evidence="1 2">Class I viral fusion protein. Under the current model, the protein has at least 3 conformational states: pre-fusion native state, pre-hairpin intermediate state, and post-fusion hairpin state. During viral and plasma cell membrane fusion, the heptad repeat (HR) regions assume a trimer-of-hairpins structure, positioning the fusion peptide in close proximity to the C-terminal region of the ectodomain. The formation of this structure appears to drive apposition and subsequent fusion of viral and plasma cell membranes. Directs fusion of viral and cellular membranes leading to delivery of the nucleocapsid into the cytoplasm. This fusion is pH independent and occurs directly at the outer cell membrane. During viral entry or virus-mediated fusion between infected cells and neighboring susceptible cells, the head domain of the H protein initially binds to its receptor and then the stalk region of the H protein transmits the fusion-triggering signal to the F protein (By similarity). Upon HN binding to its cellular receptor, the hydrophobic fusion peptide is unmasked and interacts with the cellular membrane, inducing the fusion between cell and virion membranes. Later in infection, F proteins expressed at the plasma membrane of infected cells could mediate fusion with adjacent cells to form syncytia, a cytopathic effect that could lead to tissue necrosis (By similarity).</text>
</comment>
<comment type="function">
    <text evidence="2">Some hyperfusogenic isolates can induce membrane fusion in SLAM- and nectin-4-negative cells and are linked to fatal subacute sclerosing panencephalitis (SSPE) or measles inclusion body encephalitis (MIBE). The neuropathogenicity is closely associated with enhanced propagation mediated by cell-to-cell fusion in the brain, which is principally regulated by hyperfusogenic mutations of the viral F protein. Cell-to-cell transmission of the virus also occurs with hyperfusogenic isolates.</text>
</comment>
<comment type="subunit">
    <text evidence="2">Homotrimer of disulfide-linked F1-F2.</text>
</comment>
<comment type="subcellular location">
    <subcellularLocation>
        <location evidence="1">Virion membrane</location>
        <topology evidence="1">Single-pass type I membrane protein</topology>
    </subcellularLocation>
    <subcellularLocation>
        <location evidence="1">Host cell membrane</location>
        <topology evidence="1">Single-pass membrane protein</topology>
    </subcellularLocation>
</comment>
<comment type="domain">
    <text evidence="2">Contains 3 heptad repreat regions, HRA, HRB and HRC.</text>
</comment>
<comment type="PTM">
    <text evidence="2">The inactive precursor F0 is glycosylated and proteolytically cleaved into F1 and F2 to be functionally active. The cleavage is mediated by host furin during the transport and maturation of the polypeptide.</text>
</comment>
<comment type="similarity">
    <text evidence="4">Belongs to the paramyxoviruses fusion glycoprotein family.</text>
</comment>
<sequence>MGLRVNVSAIFMAVLLTLQTPTGQIHWGNLSKIGVVGIGSASYKVMTRSSHQSLVIKLMPNTTLLNNCTRVEIAEYRRLLRTVLEPIRDALNAMTQNIRPVQIVASSRRHKRFAGVVLAGAALGVATAAQITAGIALHQSMLNSQAIDNLRASLETTNQAIEAIRQTGQEMILAVQGVQDYINNELIPSMNQLSCDLIGQKLGLKLLRYYTEILSLFGPSLRDPISAEISIQALSYVLGGDINKVLEKLGYSGGDLLGILESRGIKARITHVDTESYFIVLSIAYPTLSEIKGVIVHRLEGVSYNIGSQEWYTTVPKYVATQGYLISNFDESSCTFMPEGTVCSQNALYPMSPLLQECLRGSTKSCARTLVSGSFGNRFILSQGNLIANCASILCKCYTTGTIINQDPDKILTHIAADHCPVVEVNGVTIQVGSRRYPDAVYLHRIDLGPPISLERLDVGTSLGSAIAKLEDAKELLESSDQILRSMKGLSSTSIVYILIAVCLGGLIGIPALICCCRGRCNKRENKLVCQDQA</sequence>
<organismHost>
    <name type="scientific">Homo sapiens</name>
    <name type="common">Human</name>
    <dbReference type="NCBI Taxonomy" id="9606"/>
</organismHost>
<accession>P26032</accession>
<dbReference type="EMBL" id="D10548">
    <property type="protein sequence ID" value="BAA01405.1"/>
    <property type="molecule type" value="mRNA"/>
</dbReference>
<dbReference type="SMR" id="P26032"/>
<dbReference type="GlyCosmos" id="P26032">
    <property type="glycosylation" value="3 sites, No reported glycans"/>
</dbReference>
<dbReference type="GO" id="GO:0020002">
    <property type="term" value="C:host cell plasma membrane"/>
    <property type="evidence" value="ECO:0007669"/>
    <property type="project" value="UniProtKB-SubCell"/>
</dbReference>
<dbReference type="GO" id="GO:0016020">
    <property type="term" value="C:membrane"/>
    <property type="evidence" value="ECO:0007669"/>
    <property type="project" value="UniProtKB-KW"/>
</dbReference>
<dbReference type="GO" id="GO:0019031">
    <property type="term" value="C:viral envelope"/>
    <property type="evidence" value="ECO:0007669"/>
    <property type="project" value="UniProtKB-KW"/>
</dbReference>
<dbReference type="GO" id="GO:0055036">
    <property type="term" value="C:virion membrane"/>
    <property type="evidence" value="ECO:0007669"/>
    <property type="project" value="UniProtKB-SubCell"/>
</dbReference>
<dbReference type="GO" id="GO:0019064">
    <property type="term" value="P:fusion of virus membrane with host plasma membrane"/>
    <property type="evidence" value="ECO:0007669"/>
    <property type="project" value="UniProtKB-KW"/>
</dbReference>
<dbReference type="GO" id="GO:0046718">
    <property type="term" value="P:symbiont entry into host cell"/>
    <property type="evidence" value="ECO:0007669"/>
    <property type="project" value="UniProtKB-KW"/>
</dbReference>
<dbReference type="Gene3D" id="1.10.287.2480">
    <property type="match status" value="1"/>
</dbReference>
<dbReference type="Gene3D" id="6.10.10.110">
    <property type="match status" value="1"/>
</dbReference>
<dbReference type="Gene3D" id="2.60.40.1690">
    <property type="entry name" value="Head and neck region of the ectodomain of NDV fusion glycoprotein"/>
    <property type="match status" value="1"/>
</dbReference>
<dbReference type="Gene3D" id="2.40.490.10">
    <property type="entry name" value="Newcastle disease virus like domain"/>
    <property type="match status" value="1"/>
</dbReference>
<dbReference type="InterPro" id="IPR000776">
    <property type="entry name" value="Fusion_F0_Paramyxovir"/>
</dbReference>
<dbReference type="Pfam" id="PF00523">
    <property type="entry name" value="Fusion_gly"/>
    <property type="match status" value="1"/>
</dbReference>
<dbReference type="SUPFAM" id="SSF69922">
    <property type="entry name" value="Head and neck region of the ectodomain of NDV fusion glycoprotein"/>
    <property type="match status" value="1"/>
</dbReference>
<dbReference type="SUPFAM" id="SSF58069">
    <property type="entry name" value="Virus ectodomain"/>
    <property type="match status" value="1"/>
</dbReference>
<keyword id="KW-0165">Cleavage on pair of basic residues</keyword>
<keyword id="KW-0175">Coiled coil</keyword>
<keyword id="KW-1015">Disulfide bond</keyword>
<keyword id="KW-1169">Fusion of virus membrane with host cell membrane</keyword>
<keyword id="KW-1168">Fusion of virus membrane with host membrane</keyword>
<keyword id="KW-0325">Glycoprotein</keyword>
<keyword id="KW-1032">Host cell membrane</keyword>
<keyword id="KW-1043">Host membrane</keyword>
<keyword id="KW-0472">Membrane</keyword>
<keyword id="KW-0732">Signal</keyword>
<keyword id="KW-0812">Transmembrane</keyword>
<keyword id="KW-1133">Transmembrane helix</keyword>
<keyword id="KW-0261">Viral envelope protein</keyword>
<keyword id="KW-1162">Viral penetration into host cytoplasm</keyword>
<keyword id="KW-0946">Virion</keyword>
<keyword id="KW-1160">Virus entry into host cell</keyword>
<proteinExistence type="evidence at transcript level"/>